<proteinExistence type="inferred from homology"/>
<dbReference type="EC" id="2.7.1.50" evidence="1"/>
<dbReference type="EMBL" id="CP001615">
    <property type="protein sequence ID" value="ACQ70455.1"/>
    <property type="molecule type" value="Genomic_DNA"/>
</dbReference>
<dbReference type="RefSeq" id="WP_012727574.1">
    <property type="nucleotide sequence ID" value="NC_012673.1"/>
</dbReference>
<dbReference type="SMR" id="C4KZE2"/>
<dbReference type="STRING" id="360911.EAT1b_1529"/>
<dbReference type="KEGG" id="eat:EAT1b_1529"/>
<dbReference type="eggNOG" id="COG2145">
    <property type="taxonomic scope" value="Bacteria"/>
</dbReference>
<dbReference type="HOGENOM" id="CLU_019943_0_1_9"/>
<dbReference type="OrthoDB" id="9778146at2"/>
<dbReference type="UniPathway" id="UPA00060">
    <property type="reaction ID" value="UER00139"/>
</dbReference>
<dbReference type="Proteomes" id="UP000000716">
    <property type="component" value="Chromosome"/>
</dbReference>
<dbReference type="GO" id="GO:0005829">
    <property type="term" value="C:cytosol"/>
    <property type="evidence" value="ECO:0007669"/>
    <property type="project" value="TreeGrafter"/>
</dbReference>
<dbReference type="GO" id="GO:0005524">
    <property type="term" value="F:ATP binding"/>
    <property type="evidence" value="ECO:0007669"/>
    <property type="project" value="UniProtKB-UniRule"/>
</dbReference>
<dbReference type="GO" id="GO:0004417">
    <property type="term" value="F:hydroxyethylthiazole kinase activity"/>
    <property type="evidence" value="ECO:0007669"/>
    <property type="project" value="UniProtKB-UniRule"/>
</dbReference>
<dbReference type="GO" id="GO:0008902">
    <property type="term" value="F:hydroxymethylpyrimidine kinase activity"/>
    <property type="evidence" value="ECO:0007669"/>
    <property type="project" value="TreeGrafter"/>
</dbReference>
<dbReference type="GO" id="GO:0000287">
    <property type="term" value="F:magnesium ion binding"/>
    <property type="evidence" value="ECO:0007669"/>
    <property type="project" value="UniProtKB-UniRule"/>
</dbReference>
<dbReference type="GO" id="GO:0008972">
    <property type="term" value="F:phosphomethylpyrimidine kinase activity"/>
    <property type="evidence" value="ECO:0007669"/>
    <property type="project" value="TreeGrafter"/>
</dbReference>
<dbReference type="GO" id="GO:0009228">
    <property type="term" value="P:thiamine biosynthetic process"/>
    <property type="evidence" value="ECO:0007669"/>
    <property type="project" value="UniProtKB-KW"/>
</dbReference>
<dbReference type="GO" id="GO:0009229">
    <property type="term" value="P:thiamine diphosphate biosynthetic process"/>
    <property type="evidence" value="ECO:0007669"/>
    <property type="project" value="UniProtKB-UniRule"/>
</dbReference>
<dbReference type="CDD" id="cd01170">
    <property type="entry name" value="THZ_kinase"/>
    <property type="match status" value="1"/>
</dbReference>
<dbReference type="Gene3D" id="3.40.1190.20">
    <property type="match status" value="1"/>
</dbReference>
<dbReference type="HAMAP" id="MF_00228">
    <property type="entry name" value="Thz_kinase"/>
    <property type="match status" value="1"/>
</dbReference>
<dbReference type="InterPro" id="IPR000417">
    <property type="entry name" value="Hyethyz_kinase"/>
</dbReference>
<dbReference type="InterPro" id="IPR029056">
    <property type="entry name" value="Ribokinase-like"/>
</dbReference>
<dbReference type="NCBIfam" id="NF006830">
    <property type="entry name" value="PRK09355.1"/>
    <property type="match status" value="1"/>
</dbReference>
<dbReference type="NCBIfam" id="TIGR00694">
    <property type="entry name" value="thiM"/>
    <property type="match status" value="1"/>
</dbReference>
<dbReference type="PANTHER" id="PTHR20858:SF17">
    <property type="entry name" value="HYDROXYMETHYLPYRIMIDINE_PHOSPHOMETHYLPYRIMIDINE KINASE THI20-RELATED"/>
    <property type="match status" value="1"/>
</dbReference>
<dbReference type="PANTHER" id="PTHR20858">
    <property type="entry name" value="PHOSPHOMETHYLPYRIMIDINE KINASE"/>
    <property type="match status" value="1"/>
</dbReference>
<dbReference type="Pfam" id="PF02110">
    <property type="entry name" value="HK"/>
    <property type="match status" value="1"/>
</dbReference>
<dbReference type="PIRSF" id="PIRSF000513">
    <property type="entry name" value="Thz_kinase"/>
    <property type="match status" value="1"/>
</dbReference>
<dbReference type="PRINTS" id="PR01099">
    <property type="entry name" value="HYETHTZKNASE"/>
</dbReference>
<dbReference type="SUPFAM" id="SSF53613">
    <property type="entry name" value="Ribokinase-like"/>
    <property type="match status" value="1"/>
</dbReference>
<protein>
    <recommendedName>
        <fullName evidence="1">Hydroxyethylthiazole kinase</fullName>
        <ecNumber evidence="1">2.7.1.50</ecNumber>
    </recommendedName>
    <alternativeName>
        <fullName evidence="1">4-methyl-5-beta-hydroxyethylthiazole kinase</fullName>
        <shortName evidence="1">TH kinase</shortName>
        <shortName evidence="1">Thz kinase</shortName>
    </alternativeName>
</protein>
<reference key="1">
    <citation type="journal article" date="2011" name="J. Bacteriol.">
        <title>Complete genome sequence of the Thermophilic Bacterium Exiguobacterium sp. AT1b.</title>
        <authorList>
            <person name="Vishnivetskaya T.A."/>
            <person name="Lucas S."/>
            <person name="Copeland A."/>
            <person name="Lapidus A."/>
            <person name="Glavina del Rio T."/>
            <person name="Dalin E."/>
            <person name="Tice H."/>
            <person name="Bruce D.C."/>
            <person name="Goodwin L.A."/>
            <person name="Pitluck S."/>
            <person name="Saunders E."/>
            <person name="Brettin T."/>
            <person name="Detter C."/>
            <person name="Han C."/>
            <person name="Larimer F."/>
            <person name="Land M.L."/>
            <person name="Hauser L.J."/>
            <person name="Kyrpides N.C."/>
            <person name="Ovchinnikova G."/>
            <person name="Kathariou S."/>
            <person name="Ramaley R.F."/>
            <person name="Rodrigues D.F."/>
            <person name="Hendrix C."/>
            <person name="Richardson P."/>
            <person name="Tiedje J.M."/>
        </authorList>
    </citation>
    <scope>NUCLEOTIDE SEQUENCE [LARGE SCALE GENOMIC DNA]</scope>
    <source>
        <strain>ATCC BAA-1283 / AT1b</strain>
    </source>
</reference>
<feature type="chain" id="PRO_0000383861" description="Hydroxyethylthiazole kinase">
    <location>
        <begin position="1"/>
        <end position="263"/>
    </location>
</feature>
<feature type="binding site" evidence="1">
    <location>
        <position position="41"/>
    </location>
    <ligand>
        <name>substrate</name>
    </ligand>
</feature>
<feature type="binding site" evidence="1">
    <location>
        <position position="117"/>
    </location>
    <ligand>
        <name>ATP</name>
        <dbReference type="ChEBI" id="CHEBI:30616"/>
    </ligand>
</feature>
<feature type="binding site" evidence="1">
    <location>
        <position position="163"/>
    </location>
    <ligand>
        <name>ATP</name>
        <dbReference type="ChEBI" id="CHEBI:30616"/>
    </ligand>
</feature>
<feature type="binding site" evidence="1">
    <location>
        <position position="190"/>
    </location>
    <ligand>
        <name>substrate</name>
    </ligand>
</feature>
<comment type="function">
    <text evidence="1">Catalyzes the phosphorylation of the hydroxyl group of 4-methyl-5-beta-hydroxyethylthiazole (THZ).</text>
</comment>
<comment type="catalytic activity">
    <reaction evidence="1">
        <text>5-(2-hydroxyethyl)-4-methylthiazole + ATP = 4-methyl-5-(2-phosphooxyethyl)-thiazole + ADP + H(+)</text>
        <dbReference type="Rhea" id="RHEA:24212"/>
        <dbReference type="ChEBI" id="CHEBI:15378"/>
        <dbReference type="ChEBI" id="CHEBI:17957"/>
        <dbReference type="ChEBI" id="CHEBI:30616"/>
        <dbReference type="ChEBI" id="CHEBI:58296"/>
        <dbReference type="ChEBI" id="CHEBI:456216"/>
        <dbReference type="EC" id="2.7.1.50"/>
    </reaction>
</comment>
<comment type="cofactor">
    <cofactor evidence="1">
        <name>Mg(2+)</name>
        <dbReference type="ChEBI" id="CHEBI:18420"/>
    </cofactor>
</comment>
<comment type="pathway">
    <text evidence="1">Cofactor biosynthesis; thiamine diphosphate biosynthesis; 4-methyl-5-(2-phosphoethyl)-thiazole from 5-(2-hydroxyethyl)-4-methylthiazole: step 1/1.</text>
</comment>
<comment type="similarity">
    <text evidence="1">Belongs to the Thz kinase family.</text>
</comment>
<accession>C4KZE2</accession>
<sequence length="263" mass="27753">MRHEIWNEIRQQAPLIHNITNTVVANFSANGLLAIGASPVMADAIEEVAEMTFVSDALVLNIGTLGTMTEATMIRAGQAANEAGCPIVLDPVGVGATSFRRDVVERIMRHVRVSVIRGNAGEIATLIGVDWAARGVDAGDGACEPRQLALEAAKRYGCVVAVTGKEDMVSDGHVVMEVRGGTKRMTETTGTGCLLSAVVGACLAVEKNALKATVTAMSGYAYCGELASERAEGPGDFPIHFLNALHQLTQYTIPTNRIEVSTS</sequence>
<evidence type="ECO:0000255" key="1">
    <source>
        <dbReference type="HAMAP-Rule" id="MF_00228"/>
    </source>
</evidence>
<organism>
    <name type="scientific">Exiguobacterium sp. (strain ATCC BAA-1283 / AT1b)</name>
    <dbReference type="NCBI Taxonomy" id="360911"/>
    <lineage>
        <taxon>Bacteria</taxon>
        <taxon>Bacillati</taxon>
        <taxon>Bacillota</taxon>
        <taxon>Bacilli</taxon>
        <taxon>Bacillales</taxon>
        <taxon>Bacillales Family XII. Incertae Sedis</taxon>
        <taxon>Exiguobacterium</taxon>
    </lineage>
</organism>
<keyword id="KW-0067">ATP-binding</keyword>
<keyword id="KW-0418">Kinase</keyword>
<keyword id="KW-0460">Magnesium</keyword>
<keyword id="KW-0479">Metal-binding</keyword>
<keyword id="KW-0547">Nucleotide-binding</keyword>
<keyword id="KW-0784">Thiamine biosynthesis</keyword>
<keyword id="KW-0808">Transferase</keyword>
<name>THIM_EXISA</name>
<gene>
    <name evidence="1" type="primary">thiM</name>
    <name type="ordered locus">EAT1b_1529</name>
</gene>